<keyword id="KW-0963">Cytoplasm</keyword>
<keyword id="KW-0312">Gluconeogenesis</keyword>
<keyword id="KW-0324">Glycolysis</keyword>
<keyword id="KW-0413">Isomerase</keyword>
<keyword id="KW-1185">Reference proteome</keyword>
<name>G6PI_STAA8</name>
<evidence type="ECO:0000255" key="1">
    <source>
        <dbReference type="HAMAP-Rule" id="MF_00473"/>
    </source>
</evidence>
<dbReference type="EC" id="5.3.1.9" evidence="1"/>
<dbReference type="EMBL" id="CP000253">
    <property type="protein sequence ID" value="ABD30025.1"/>
    <property type="molecule type" value="Genomic_DNA"/>
</dbReference>
<dbReference type="RefSeq" id="WP_000148849.1">
    <property type="nucleotide sequence ID" value="NZ_LS483365.1"/>
</dbReference>
<dbReference type="RefSeq" id="YP_499453.1">
    <property type="nucleotide sequence ID" value="NC_007795.1"/>
</dbReference>
<dbReference type="SMR" id="Q2FZU0"/>
<dbReference type="STRING" id="93061.SAOUHSC_00900"/>
<dbReference type="PaxDb" id="1280-SAXN108_0957"/>
<dbReference type="GeneID" id="3921746"/>
<dbReference type="KEGG" id="sao:SAOUHSC_00900"/>
<dbReference type="PATRIC" id="fig|93061.5.peg.821"/>
<dbReference type="eggNOG" id="COG0166">
    <property type="taxonomic scope" value="Bacteria"/>
</dbReference>
<dbReference type="HOGENOM" id="CLU_037303_0_1_9"/>
<dbReference type="OrthoDB" id="140919at2"/>
<dbReference type="UniPathway" id="UPA00109">
    <property type="reaction ID" value="UER00181"/>
</dbReference>
<dbReference type="UniPathway" id="UPA00138"/>
<dbReference type="PRO" id="PR:Q2FZU0"/>
<dbReference type="Proteomes" id="UP000008816">
    <property type="component" value="Chromosome"/>
</dbReference>
<dbReference type="GO" id="GO:0005829">
    <property type="term" value="C:cytosol"/>
    <property type="evidence" value="ECO:0000318"/>
    <property type="project" value="GO_Central"/>
</dbReference>
<dbReference type="GO" id="GO:0097367">
    <property type="term" value="F:carbohydrate derivative binding"/>
    <property type="evidence" value="ECO:0007669"/>
    <property type="project" value="InterPro"/>
</dbReference>
<dbReference type="GO" id="GO:0004347">
    <property type="term" value="F:glucose-6-phosphate isomerase activity"/>
    <property type="evidence" value="ECO:0000318"/>
    <property type="project" value="GO_Central"/>
</dbReference>
<dbReference type="GO" id="GO:0048029">
    <property type="term" value="F:monosaccharide binding"/>
    <property type="evidence" value="ECO:0000318"/>
    <property type="project" value="GO_Central"/>
</dbReference>
<dbReference type="GO" id="GO:0006094">
    <property type="term" value="P:gluconeogenesis"/>
    <property type="evidence" value="ECO:0000318"/>
    <property type="project" value="GO_Central"/>
</dbReference>
<dbReference type="GO" id="GO:0051156">
    <property type="term" value="P:glucose 6-phosphate metabolic process"/>
    <property type="evidence" value="ECO:0000318"/>
    <property type="project" value="GO_Central"/>
</dbReference>
<dbReference type="GO" id="GO:0006096">
    <property type="term" value="P:glycolytic process"/>
    <property type="evidence" value="ECO:0000318"/>
    <property type="project" value="GO_Central"/>
</dbReference>
<dbReference type="CDD" id="cd05015">
    <property type="entry name" value="SIS_PGI_1"/>
    <property type="match status" value="1"/>
</dbReference>
<dbReference type="CDD" id="cd05016">
    <property type="entry name" value="SIS_PGI_2"/>
    <property type="match status" value="1"/>
</dbReference>
<dbReference type="FunFam" id="3.40.50.10490:FF:000015">
    <property type="entry name" value="Glucose-6-phosphate isomerase"/>
    <property type="match status" value="1"/>
</dbReference>
<dbReference type="FunFam" id="3.40.50.10490:FF:000016">
    <property type="entry name" value="Glucose-6-phosphate isomerase"/>
    <property type="match status" value="1"/>
</dbReference>
<dbReference type="Gene3D" id="3.40.50.10490">
    <property type="entry name" value="Glucose-6-phosphate isomerase like protein, domain 1"/>
    <property type="match status" value="3"/>
</dbReference>
<dbReference type="HAMAP" id="MF_00473">
    <property type="entry name" value="G6P_isomerase"/>
    <property type="match status" value="1"/>
</dbReference>
<dbReference type="InterPro" id="IPR001672">
    <property type="entry name" value="G6P_Isomerase"/>
</dbReference>
<dbReference type="InterPro" id="IPR018189">
    <property type="entry name" value="Phosphoglucose_isomerase_CS"/>
</dbReference>
<dbReference type="InterPro" id="IPR046348">
    <property type="entry name" value="SIS_dom_sf"/>
</dbReference>
<dbReference type="InterPro" id="IPR035476">
    <property type="entry name" value="SIS_PGI_1"/>
</dbReference>
<dbReference type="InterPro" id="IPR035482">
    <property type="entry name" value="SIS_PGI_2"/>
</dbReference>
<dbReference type="NCBIfam" id="NF010697">
    <property type="entry name" value="PRK14097.1"/>
    <property type="match status" value="1"/>
</dbReference>
<dbReference type="PANTHER" id="PTHR11469">
    <property type="entry name" value="GLUCOSE-6-PHOSPHATE ISOMERASE"/>
    <property type="match status" value="1"/>
</dbReference>
<dbReference type="PANTHER" id="PTHR11469:SF1">
    <property type="entry name" value="GLUCOSE-6-PHOSPHATE ISOMERASE"/>
    <property type="match status" value="1"/>
</dbReference>
<dbReference type="Pfam" id="PF00342">
    <property type="entry name" value="PGI"/>
    <property type="match status" value="1"/>
</dbReference>
<dbReference type="PRINTS" id="PR00662">
    <property type="entry name" value="G6PISOMERASE"/>
</dbReference>
<dbReference type="SUPFAM" id="SSF53697">
    <property type="entry name" value="SIS domain"/>
    <property type="match status" value="1"/>
</dbReference>
<dbReference type="PROSITE" id="PS00765">
    <property type="entry name" value="P_GLUCOSE_ISOMERASE_1"/>
    <property type="match status" value="1"/>
</dbReference>
<dbReference type="PROSITE" id="PS00174">
    <property type="entry name" value="P_GLUCOSE_ISOMERASE_2"/>
    <property type="match status" value="1"/>
</dbReference>
<dbReference type="PROSITE" id="PS51463">
    <property type="entry name" value="P_GLUCOSE_ISOMERASE_3"/>
    <property type="match status" value="1"/>
</dbReference>
<comment type="function">
    <text evidence="1">Catalyzes the reversible isomerization of glucose-6-phosphate to fructose-6-phosphate.</text>
</comment>
<comment type="catalytic activity">
    <reaction evidence="1">
        <text>alpha-D-glucose 6-phosphate = beta-D-fructose 6-phosphate</text>
        <dbReference type="Rhea" id="RHEA:11816"/>
        <dbReference type="ChEBI" id="CHEBI:57634"/>
        <dbReference type="ChEBI" id="CHEBI:58225"/>
        <dbReference type="EC" id="5.3.1.9"/>
    </reaction>
</comment>
<comment type="pathway">
    <text evidence="1">Carbohydrate biosynthesis; gluconeogenesis.</text>
</comment>
<comment type="pathway">
    <text evidence="1">Carbohydrate degradation; glycolysis; D-glyceraldehyde 3-phosphate and glycerone phosphate from D-glucose: step 2/4.</text>
</comment>
<comment type="subcellular location">
    <subcellularLocation>
        <location evidence="1">Cytoplasm</location>
    </subcellularLocation>
</comment>
<comment type="similarity">
    <text evidence="1">Belongs to the GPI family.</text>
</comment>
<organism>
    <name type="scientific">Staphylococcus aureus (strain NCTC 8325 / PS 47)</name>
    <dbReference type="NCBI Taxonomy" id="93061"/>
    <lineage>
        <taxon>Bacteria</taxon>
        <taxon>Bacillati</taxon>
        <taxon>Bacillota</taxon>
        <taxon>Bacilli</taxon>
        <taxon>Bacillales</taxon>
        <taxon>Staphylococcaceae</taxon>
        <taxon>Staphylococcus</taxon>
    </lineage>
</organism>
<reference key="1">
    <citation type="book" date="2006" name="Gram positive pathogens, 2nd edition">
        <title>The Staphylococcus aureus NCTC 8325 genome.</title>
        <editorList>
            <person name="Fischetti V."/>
            <person name="Novick R."/>
            <person name="Ferretti J."/>
            <person name="Portnoy D."/>
            <person name="Rood J."/>
        </editorList>
        <authorList>
            <person name="Gillaspy A.F."/>
            <person name="Worrell V."/>
            <person name="Orvis J."/>
            <person name="Roe B.A."/>
            <person name="Dyer D.W."/>
            <person name="Iandolo J.J."/>
        </authorList>
    </citation>
    <scope>NUCLEOTIDE SEQUENCE [LARGE SCALE GENOMIC DNA]</scope>
    <source>
        <strain>NCTC 8325 / PS 47</strain>
    </source>
</reference>
<protein>
    <recommendedName>
        <fullName evidence="1">Glucose-6-phosphate isomerase</fullName>
        <shortName evidence="1">GPI</shortName>
        <ecNumber evidence="1">5.3.1.9</ecNumber>
    </recommendedName>
    <alternativeName>
        <fullName evidence="1">Phosphoglucose isomerase</fullName>
        <shortName evidence="1">PGI</shortName>
    </alternativeName>
    <alternativeName>
        <fullName evidence="1">Phosphohexose isomerase</fullName>
        <shortName evidence="1">PHI</shortName>
    </alternativeName>
</protein>
<accession>Q2FZU0</accession>
<feature type="chain" id="PRO_0000252648" description="Glucose-6-phosphate isomerase">
    <location>
        <begin position="1"/>
        <end position="443"/>
    </location>
</feature>
<feature type="active site" description="Proton donor" evidence="1">
    <location>
        <position position="285"/>
    </location>
</feature>
<feature type="active site" evidence="1">
    <location>
        <position position="306"/>
    </location>
</feature>
<feature type="active site" evidence="1">
    <location>
        <position position="420"/>
    </location>
</feature>
<gene>
    <name evidence="1" type="primary">pgi</name>
    <name type="ordered locus">SAOUHSC_00900</name>
</gene>
<sequence length="443" mass="49822">MTHIQLDFSKTLEFFGEHELKQQQEIVKSIHKTIHEGTGAGSDFLGWIDLPVDYDKEEFSRIVEASKRIKENSDVLVVIGIGGSYLGARAAIEMLTSSFRNSNEYPEIVFVGNHLSSTYTKELVDYLADKDFSVNVISKSGTTTEPAVAFRLFKQLVEERYGKEEAQKRIFATTDKEKGALKQLATNEGYETFIVPDDVGGRYSVLTAVGLLPIATAGINIEAMMIGAAKAREELSSDKLEENIAYQYATIRNILYAKGYTTEMLINYEPSMQYFNEWWKQLFGESEGKDFKGIYPSSANYTTDLHSLGQYVQEGRRFLFETVVKVNHPKYDITIEKDSDDLDGLNYLAGKTIDEVNTKAFEGTLLAHTDGGVPNMVVNIPQLDEETFGYVVYFFELACAMSGYQLGVNPFNQPGVEAYKQNMFALLGKPGFEDLKKELEERL</sequence>
<proteinExistence type="inferred from homology"/>